<accession>Q081H6</accession>
<organism>
    <name type="scientific">Shewanella frigidimarina (strain NCIMB 400)</name>
    <dbReference type="NCBI Taxonomy" id="318167"/>
    <lineage>
        <taxon>Bacteria</taxon>
        <taxon>Pseudomonadati</taxon>
        <taxon>Pseudomonadota</taxon>
        <taxon>Gammaproteobacteria</taxon>
        <taxon>Alteromonadales</taxon>
        <taxon>Shewanellaceae</taxon>
        <taxon>Shewanella</taxon>
    </lineage>
</organism>
<keyword id="KW-0378">Hydrolase</keyword>
<keyword id="KW-0546">Nucleotide metabolism</keyword>
<keyword id="KW-0547">Nucleotide-binding</keyword>
<keyword id="KW-1185">Reference proteome</keyword>
<feature type="chain" id="PRO_1000009809" description="dCTP deaminase">
    <location>
        <begin position="1"/>
        <end position="194"/>
    </location>
</feature>
<feature type="region of interest" description="Disordered" evidence="2">
    <location>
        <begin position="174"/>
        <end position="194"/>
    </location>
</feature>
<feature type="active site" description="Proton donor/acceptor" evidence="1">
    <location>
        <position position="138"/>
    </location>
</feature>
<feature type="binding site" evidence="1">
    <location>
        <begin position="110"/>
        <end position="115"/>
    </location>
    <ligand>
        <name>dCTP</name>
        <dbReference type="ChEBI" id="CHEBI:61481"/>
    </ligand>
</feature>
<feature type="binding site" evidence="1">
    <location>
        <position position="128"/>
    </location>
    <ligand>
        <name>dCTP</name>
        <dbReference type="ChEBI" id="CHEBI:61481"/>
    </ligand>
</feature>
<feature type="binding site" evidence="1">
    <location>
        <begin position="136"/>
        <end position="138"/>
    </location>
    <ligand>
        <name>dCTP</name>
        <dbReference type="ChEBI" id="CHEBI:61481"/>
    </ligand>
</feature>
<feature type="binding site" evidence="1">
    <location>
        <position position="171"/>
    </location>
    <ligand>
        <name>dCTP</name>
        <dbReference type="ChEBI" id="CHEBI:61481"/>
    </ligand>
</feature>
<feature type="binding site" evidence="1">
    <location>
        <position position="178"/>
    </location>
    <ligand>
        <name>dCTP</name>
        <dbReference type="ChEBI" id="CHEBI:61481"/>
    </ligand>
</feature>
<feature type="binding site" evidence="1">
    <location>
        <position position="182"/>
    </location>
    <ligand>
        <name>dCTP</name>
        <dbReference type="ChEBI" id="CHEBI:61481"/>
    </ligand>
</feature>
<gene>
    <name evidence="1" type="primary">dcd</name>
    <name type="ordered locus">Sfri_2243</name>
</gene>
<protein>
    <recommendedName>
        <fullName evidence="1">dCTP deaminase</fullName>
        <ecNumber evidence="1">3.5.4.13</ecNumber>
    </recommendedName>
    <alternativeName>
        <fullName evidence="1">Deoxycytidine triphosphate deaminase</fullName>
    </alternativeName>
</protein>
<name>DCD_SHEFN</name>
<reference key="1">
    <citation type="submission" date="2006-08" db="EMBL/GenBank/DDBJ databases">
        <title>Complete sequence of Shewanella frigidimarina NCIMB 400.</title>
        <authorList>
            <consortium name="US DOE Joint Genome Institute"/>
            <person name="Copeland A."/>
            <person name="Lucas S."/>
            <person name="Lapidus A."/>
            <person name="Barry K."/>
            <person name="Detter J.C."/>
            <person name="Glavina del Rio T."/>
            <person name="Hammon N."/>
            <person name="Israni S."/>
            <person name="Dalin E."/>
            <person name="Tice H."/>
            <person name="Pitluck S."/>
            <person name="Fredrickson J.K."/>
            <person name="Kolker E."/>
            <person name="McCuel L.A."/>
            <person name="DiChristina T."/>
            <person name="Nealson K.H."/>
            <person name="Newman D."/>
            <person name="Tiedje J.M."/>
            <person name="Zhou J."/>
            <person name="Romine M.F."/>
            <person name="Culley D.E."/>
            <person name="Serres M."/>
            <person name="Chertkov O."/>
            <person name="Brettin T."/>
            <person name="Bruce D."/>
            <person name="Han C."/>
            <person name="Tapia R."/>
            <person name="Gilna P."/>
            <person name="Schmutz J."/>
            <person name="Larimer F."/>
            <person name="Land M."/>
            <person name="Hauser L."/>
            <person name="Kyrpides N."/>
            <person name="Mikhailova N."/>
            <person name="Richardson P."/>
        </authorList>
    </citation>
    <scope>NUCLEOTIDE SEQUENCE [LARGE SCALE GENOMIC DNA]</scope>
    <source>
        <strain>NCIMB 400</strain>
    </source>
</reference>
<evidence type="ECO:0000255" key="1">
    <source>
        <dbReference type="HAMAP-Rule" id="MF_00146"/>
    </source>
</evidence>
<evidence type="ECO:0000256" key="2">
    <source>
        <dbReference type="SAM" id="MobiDB-lite"/>
    </source>
</evidence>
<comment type="function">
    <text evidence="1">Catalyzes the deamination of dCTP to dUTP.</text>
</comment>
<comment type="catalytic activity">
    <reaction evidence="1">
        <text>dCTP + H2O + H(+) = dUTP + NH4(+)</text>
        <dbReference type="Rhea" id="RHEA:22680"/>
        <dbReference type="ChEBI" id="CHEBI:15377"/>
        <dbReference type="ChEBI" id="CHEBI:15378"/>
        <dbReference type="ChEBI" id="CHEBI:28938"/>
        <dbReference type="ChEBI" id="CHEBI:61481"/>
        <dbReference type="ChEBI" id="CHEBI:61555"/>
        <dbReference type="EC" id="3.5.4.13"/>
    </reaction>
</comment>
<comment type="pathway">
    <text evidence="1">Pyrimidine metabolism; dUMP biosynthesis; dUMP from dCTP (dUTP route): step 1/2.</text>
</comment>
<comment type="subunit">
    <text evidence="1">Homotrimer.</text>
</comment>
<comment type="similarity">
    <text evidence="1">Belongs to the dCTP deaminase family.</text>
</comment>
<sequence length="194" mass="21379">MRLTDIEIEQCLDNGTIIIDPRPGIEAISGVSVDVRLGSQFRVFKDHTAPYIDLSGPSAEMQIALDRIMSDKIEIADDQAFFLHPGELALAVTYESVTLPADIVGWLDGRSSLARLGLMVHVTAHRIDPGWQGKIVLEFFNSGKLPLALRPGMTIGALNFERLSSAVARPYNTRKSSKYKDQQEAVASRISQDK</sequence>
<dbReference type="EC" id="3.5.4.13" evidence="1"/>
<dbReference type="EMBL" id="CP000447">
    <property type="protein sequence ID" value="ABI72089.1"/>
    <property type="molecule type" value="Genomic_DNA"/>
</dbReference>
<dbReference type="RefSeq" id="WP_011637699.1">
    <property type="nucleotide sequence ID" value="NC_008345.1"/>
</dbReference>
<dbReference type="SMR" id="Q081H6"/>
<dbReference type="STRING" id="318167.Sfri_2243"/>
<dbReference type="KEGG" id="sfr:Sfri_2243"/>
<dbReference type="eggNOG" id="COG0717">
    <property type="taxonomic scope" value="Bacteria"/>
</dbReference>
<dbReference type="HOGENOM" id="CLU_087476_2_0_6"/>
<dbReference type="OrthoDB" id="9780956at2"/>
<dbReference type="UniPathway" id="UPA00610">
    <property type="reaction ID" value="UER00665"/>
</dbReference>
<dbReference type="Proteomes" id="UP000000684">
    <property type="component" value="Chromosome"/>
</dbReference>
<dbReference type="GO" id="GO:0008829">
    <property type="term" value="F:dCTP deaminase activity"/>
    <property type="evidence" value="ECO:0007669"/>
    <property type="project" value="UniProtKB-UniRule"/>
</dbReference>
<dbReference type="GO" id="GO:0000166">
    <property type="term" value="F:nucleotide binding"/>
    <property type="evidence" value="ECO:0007669"/>
    <property type="project" value="UniProtKB-KW"/>
</dbReference>
<dbReference type="GO" id="GO:0006226">
    <property type="term" value="P:dUMP biosynthetic process"/>
    <property type="evidence" value="ECO:0007669"/>
    <property type="project" value="UniProtKB-UniPathway"/>
</dbReference>
<dbReference type="GO" id="GO:0006229">
    <property type="term" value="P:dUTP biosynthetic process"/>
    <property type="evidence" value="ECO:0007669"/>
    <property type="project" value="UniProtKB-UniRule"/>
</dbReference>
<dbReference type="GO" id="GO:0015949">
    <property type="term" value="P:nucleobase-containing small molecule interconversion"/>
    <property type="evidence" value="ECO:0007669"/>
    <property type="project" value="TreeGrafter"/>
</dbReference>
<dbReference type="CDD" id="cd07557">
    <property type="entry name" value="trimeric_dUTPase"/>
    <property type="match status" value="1"/>
</dbReference>
<dbReference type="FunFam" id="2.70.40.10:FF:000003">
    <property type="entry name" value="dCTP deaminase"/>
    <property type="match status" value="1"/>
</dbReference>
<dbReference type="Gene3D" id="2.70.40.10">
    <property type="match status" value="1"/>
</dbReference>
<dbReference type="HAMAP" id="MF_00146">
    <property type="entry name" value="dCTP_deaminase"/>
    <property type="match status" value="1"/>
</dbReference>
<dbReference type="InterPro" id="IPR011962">
    <property type="entry name" value="dCTP_deaminase"/>
</dbReference>
<dbReference type="InterPro" id="IPR036157">
    <property type="entry name" value="dUTPase-like_sf"/>
</dbReference>
<dbReference type="InterPro" id="IPR033704">
    <property type="entry name" value="dUTPase_trimeric"/>
</dbReference>
<dbReference type="NCBIfam" id="TIGR02274">
    <property type="entry name" value="dCTP_deam"/>
    <property type="match status" value="1"/>
</dbReference>
<dbReference type="PANTHER" id="PTHR42680">
    <property type="entry name" value="DCTP DEAMINASE"/>
    <property type="match status" value="1"/>
</dbReference>
<dbReference type="PANTHER" id="PTHR42680:SF3">
    <property type="entry name" value="DCTP DEAMINASE"/>
    <property type="match status" value="1"/>
</dbReference>
<dbReference type="Pfam" id="PF22769">
    <property type="entry name" value="DCD"/>
    <property type="match status" value="1"/>
</dbReference>
<dbReference type="SUPFAM" id="SSF51283">
    <property type="entry name" value="dUTPase-like"/>
    <property type="match status" value="1"/>
</dbReference>
<proteinExistence type="inferred from homology"/>